<reference key="1">
    <citation type="journal article" date="2007" name="J. Bacteriol.">
        <title>Genome sequence analysis of the emerging human pathogenic acetic acid bacterium Granulibacter bethesdensis.</title>
        <authorList>
            <person name="Greenberg D.E."/>
            <person name="Porcella S.F."/>
            <person name="Zelazny A.M."/>
            <person name="Virtaneva K."/>
            <person name="Sturdevant D.E."/>
            <person name="Kupko J.J. III"/>
            <person name="Barbian K.D."/>
            <person name="Babar A."/>
            <person name="Dorward D.W."/>
            <person name="Holland S.M."/>
        </authorList>
    </citation>
    <scope>NUCLEOTIDE SEQUENCE [LARGE SCALE GENOMIC DNA]</scope>
    <source>
        <strain>ATCC BAA-1260 / CGDNIH1</strain>
    </source>
</reference>
<protein>
    <recommendedName>
        <fullName evidence="1">Recombination protein RecR</fullName>
    </recommendedName>
</protein>
<sequence>MGGPELEQLIALLARLPGLGPRSARRAALRLLQQPETRLLPLAAAMQNAARAVKTCRVCGNLDSADPCSVCTDPSRENGLICVVESVGDLWAMDRAGIYRGLYHVLGGVLSALAGTGPDALNWPALMRRIESSRPSATPVTEVILALGATVDGATTAHWLAEQLRPMGVSVTRLAQGIPIGGALDVLDDGTLAAAMRARRSA</sequence>
<evidence type="ECO:0000255" key="1">
    <source>
        <dbReference type="HAMAP-Rule" id="MF_00017"/>
    </source>
</evidence>
<accession>Q0BVJ5</accession>
<dbReference type="EMBL" id="CP000394">
    <property type="protein sequence ID" value="ABI61157.1"/>
    <property type="molecule type" value="Genomic_DNA"/>
</dbReference>
<dbReference type="RefSeq" id="WP_011630967.1">
    <property type="nucleotide sequence ID" value="NC_008343.2"/>
</dbReference>
<dbReference type="SMR" id="Q0BVJ5"/>
<dbReference type="STRING" id="391165.GbCGDNIH1_0259"/>
<dbReference type="GeneID" id="69744512"/>
<dbReference type="KEGG" id="gbe:GbCGDNIH1_0259"/>
<dbReference type="eggNOG" id="COG0353">
    <property type="taxonomic scope" value="Bacteria"/>
</dbReference>
<dbReference type="HOGENOM" id="CLU_060739_1_1_5"/>
<dbReference type="OrthoDB" id="9802672at2"/>
<dbReference type="Proteomes" id="UP000001963">
    <property type="component" value="Chromosome"/>
</dbReference>
<dbReference type="GO" id="GO:0003677">
    <property type="term" value="F:DNA binding"/>
    <property type="evidence" value="ECO:0007669"/>
    <property type="project" value="UniProtKB-UniRule"/>
</dbReference>
<dbReference type="GO" id="GO:0008270">
    <property type="term" value="F:zinc ion binding"/>
    <property type="evidence" value="ECO:0007669"/>
    <property type="project" value="UniProtKB-KW"/>
</dbReference>
<dbReference type="GO" id="GO:0006310">
    <property type="term" value="P:DNA recombination"/>
    <property type="evidence" value="ECO:0007669"/>
    <property type="project" value="UniProtKB-UniRule"/>
</dbReference>
<dbReference type="GO" id="GO:0006281">
    <property type="term" value="P:DNA repair"/>
    <property type="evidence" value="ECO:0007669"/>
    <property type="project" value="UniProtKB-UniRule"/>
</dbReference>
<dbReference type="CDD" id="cd01025">
    <property type="entry name" value="TOPRIM_recR"/>
    <property type="match status" value="1"/>
</dbReference>
<dbReference type="Gene3D" id="3.30.60.80">
    <property type="match status" value="1"/>
</dbReference>
<dbReference type="Gene3D" id="3.40.1360.10">
    <property type="match status" value="1"/>
</dbReference>
<dbReference type="Gene3D" id="1.10.8.420">
    <property type="entry name" value="RecR Domain 1"/>
    <property type="match status" value="1"/>
</dbReference>
<dbReference type="HAMAP" id="MF_00017">
    <property type="entry name" value="RecR"/>
    <property type="match status" value="1"/>
</dbReference>
<dbReference type="InterPro" id="IPR000093">
    <property type="entry name" value="DNA_Rcmb_RecR"/>
</dbReference>
<dbReference type="InterPro" id="IPR023627">
    <property type="entry name" value="Rcmb_RecR"/>
</dbReference>
<dbReference type="InterPro" id="IPR015967">
    <property type="entry name" value="Rcmb_RecR_Znf"/>
</dbReference>
<dbReference type="InterPro" id="IPR006171">
    <property type="entry name" value="TOPRIM_dom"/>
</dbReference>
<dbReference type="InterPro" id="IPR034137">
    <property type="entry name" value="TOPRIM_RecR"/>
</dbReference>
<dbReference type="NCBIfam" id="TIGR00615">
    <property type="entry name" value="recR"/>
    <property type="match status" value="1"/>
</dbReference>
<dbReference type="PANTHER" id="PTHR30446">
    <property type="entry name" value="RECOMBINATION PROTEIN RECR"/>
    <property type="match status" value="1"/>
</dbReference>
<dbReference type="PANTHER" id="PTHR30446:SF0">
    <property type="entry name" value="RECOMBINATION PROTEIN RECR"/>
    <property type="match status" value="1"/>
</dbReference>
<dbReference type="Pfam" id="PF21175">
    <property type="entry name" value="RecR_C"/>
    <property type="match status" value="1"/>
</dbReference>
<dbReference type="Pfam" id="PF21176">
    <property type="entry name" value="RecR_HhH"/>
    <property type="match status" value="1"/>
</dbReference>
<dbReference type="Pfam" id="PF02132">
    <property type="entry name" value="RecR_ZnF"/>
    <property type="match status" value="1"/>
</dbReference>
<dbReference type="Pfam" id="PF13662">
    <property type="entry name" value="Toprim_4"/>
    <property type="match status" value="1"/>
</dbReference>
<dbReference type="SMART" id="SM00493">
    <property type="entry name" value="TOPRIM"/>
    <property type="match status" value="1"/>
</dbReference>
<dbReference type="SUPFAM" id="SSF111304">
    <property type="entry name" value="Recombination protein RecR"/>
    <property type="match status" value="1"/>
</dbReference>
<dbReference type="PROSITE" id="PS50880">
    <property type="entry name" value="TOPRIM"/>
    <property type="match status" value="1"/>
</dbReference>
<keyword id="KW-0227">DNA damage</keyword>
<keyword id="KW-0233">DNA recombination</keyword>
<keyword id="KW-0234">DNA repair</keyword>
<keyword id="KW-0479">Metal-binding</keyword>
<keyword id="KW-1185">Reference proteome</keyword>
<keyword id="KW-0862">Zinc</keyword>
<keyword id="KW-0863">Zinc-finger</keyword>
<feature type="chain" id="PRO_0000322894" description="Recombination protein RecR">
    <location>
        <begin position="1"/>
        <end position="202"/>
    </location>
</feature>
<feature type="domain" description="Toprim" evidence="1">
    <location>
        <begin position="79"/>
        <end position="179"/>
    </location>
</feature>
<feature type="zinc finger region" description="C4-type" evidence="1">
    <location>
        <begin position="56"/>
        <end position="71"/>
    </location>
</feature>
<proteinExistence type="inferred from homology"/>
<comment type="function">
    <text evidence="1">May play a role in DNA repair. It seems to be involved in an RecBC-independent recombinational process of DNA repair. It may act with RecF and RecO.</text>
</comment>
<comment type="similarity">
    <text evidence="1">Belongs to the RecR family.</text>
</comment>
<organism>
    <name type="scientific">Granulibacter bethesdensis (strain ATCC BAA-1260 / CGDNIH1)</name>
    <dbReference type="NCBI Taxonomy" id="391165"/>
    <lineage>
        <taxon>Bacteria</taxon>
        <taxon>Pseudomonadati</taxon>
        <taxon>Pseudomonadota</taxon>
        <taxon>Alphaproteobacteria</taxon>
        <taxon>Acetobacterales</taxon>
        <taxon>Acetobacteraceae</taxon>
        <taxon>Granulibacter</taxon>
    </lineage>
</organism>
<gene>
    <name evidence="1" type="primary">recR</name>
    <name type="ordered locus">GbCGDNIH1_0259</name>
</gene>
<name>RECR_GRABC</name>